<protein>
    <recommendedName>
        <fullName evidence="1">Phosphoenolpyruvate carboxykinase (ATP)</fullName>
        <shortName evidence="1">PCK</shortName>
        <shortName evidence="1">PEP carboxykinase</shortName>
        <shortName evidence="1">PEPCK</shortName>
        <ecNumber evidence="1">4.1.1.49</ecNumber>
    </recommendedName>
</protein>
<accession>B5FCE7</accession>
<evidence type="ECO:0000255" key="1">
    <source>
        <dbReference type="HAMAP-Rule" id="MF_00453"/>
    </source>
</evidence>
<proteinExistence type="inferred from homology"/>
<organism>
    <name type="scientific">Aliivibrio fischeri (strain MJ11)</name>
    <name type="common">Vibrio fischeri</name>
    <dbReference type="NCBI Taxonomy" id="388396"/>
    <lineage>
        <taxon>Bacteria</taxon>
        <taxon>Pseudomonadati</taxon>
        <taxon>Pseudomonadota</taxon>
        <taxon>Gammaproteobacteria</taxon>
        <taxon>Vibrionales</taxon>
        <taxon>Vibrionaceae</taxon>
        <taxon>Aliivibrio</taxon>
    </lineage>
</organism>
<dbReference type="EC" id="4.1.1.49" evidence="1"/>
<dbReference type="EMBL" id="CP001139">
    <property type="protein sequence ID" value="ACH67324.1"/>
    <property type="molecule type" value="Genomic_DNA"/>
</dbReference>
<dbReference type="RefSeq" id="WP_012534352.1">
    <property type="nucleotide sequence ID" value="NC_011184.1"/>
</dbReference>
<dbReference type="SMR" id="B5FCE7"/>
<dbReference type="KEGG" id="vfm:VFMJ11_2601"/>
<dbReference type="HOGENOM" id="CLU_018247_0_1_6"/>
<dbReference type="UniPathway" id="UPA00138"/>
<dbReference type="Proteomes" id="UP000001857">
    <property type="component" value="Chromosome I"/>
</dbReference>
<dbReference type="GO" id="GO:0005829">
    <property type="term" value="C:cytosol"/>
    <property type="evidence" value="ECO:0007669"/>
    <property type="project" value="TreeGrafter"/>
</dbReference>
<dbReference type="GO" id="GO:0005524">
    <property type="term" value="F:ATP binding"/>
    <property type="evidence" value="ECO:0007669"/>
    <property type="project" value="UniProtKB-UniRule"/>
</dbReference>
<dbReference type="GO" id="GO:0046872">
    <property type="term" value="F:metal ion binding"/>
    <property type="evidence" value="ECO:0007669"/>
    <property type="project" value="UniProtKB-KW"/>
</dbReference>
<dbReference type="GO" id="GO:0004612">
    <property type="term" value="F:phosphoenolpyruvate carboxykinase (ATP) activity"/>
    <property type="evidence" value="ECO:0007669"/>
    <property type="project" value="UniProtKB-UniRule"/>
</dbReference>
<dbReference type="GO" id="GO:0006094">
    <property type="term" value="P:gluconeogenesis"/>
    <property type="evidence" value="ECO:0007669"/>
    <property type="project" value="UniProtKB-UniRule"/>
</dbReference>
<dbReference type="CDD" id="cd00484">
    <property type="entry name" value="PEPCK_ATP"/>
    <property type="match status" value="1"/>
</dbReference>
<dbReference type="FunFam" id="2.170.8.10:FF:000001">
    <property type="entry name" value="Phosphoenolpyruvate carboxykinase (ATP)"/>
    <property type="match status" value="1"/>
</dbReference>
<dbReference type="FunFam" id="3.40.449.10:FF:000001">
    <property type="entry name" value="Phosphoenolpyruvate carboxykinase (ATP)"/>
    <property type="match status" value="1"/>
</dbReference>
<dbReference type="Gene3D" id="3.90.228.20">
    <property type="match status" value="1"/>
</dbReference>
<dbReference type="Gene3D" id="3.40.449.10">
    <property type="entry name" value="Phosphoenolpyruvate Carboxykinase, domain 1"/>
    <property type="match status" value="1"/>
</dbReference>
<dbReference type="Gene3D" id="2.170.8.10">
    <property type="entry name" value="Phosphoenolpyruvate Carboxykinase, domain 2"/>
    <property type="match status" value="1"/>
</dbReference>
<dbReference type="HAMAP" id="MF_00453">
    <property type="entry name" value="PEPCK_ATP"/>
    <property type="match status" value="1"/>
</dbReference>
<dbReference type="InterPro" id="IPR001272">
    <property type="entry name" value="PEP_carboxykinase_ATP"/>
</dbReference>
<dbReference type="InterPro" id="IPR013035">
    <property type="entry name" value="PEP_carboxykinase_C"/>
</dbReference>
<dbReference type="InterPro" id="IPR008210">
    <property type="entry name" value="PEP_carboxykinase_N"/>
</dbReference>
<dbReference type="InterPro" id="IPR015994">
    <property type="entry name" value="PEPCK_ATP_CS"/>
</dbReference>
<dbReference type="NCBIfam" id="TIGR00224">
    <property type="entry name" value="pckA"/>
    <property type="match status" value="1"/>
</dbReference>
<dbReference type="NCBIfam" id="NF006819">
    <property type="entry name" value="PRK09344.1-1"/>
    <property type="match status" value="1"/>
</dbReference>
<dbReference type="NCBIfam" id="NF006820">
    <property type="entry name" value="PRK09344.1-2"/>
    <property type="match status" value="1"/>
</dbReference>
<dbReference type="NCBIfam" id="NF006821">
    <property type="entry name" value="PRK09344.1-3"/>
    <property type="match status" value="1"/>
</dbReference>
<dbReference type="PANTHER" id="PTHR30031:SF0">
    <property type="entry name" value="PHOSPHOENOLPYRUVATE CARBOXYKINASE (ATP)"/>
    <property type="match status" value="1"/>
</dbReference>
<dbReference type="PANTHER" id="PTHR30031">
    <property type="entry name" value="PHOSPHOENOLPYRUVATE CARBOXYKINASE ATP"/>
    <property type="match status" value="1"/>
</dbReference>
<dbReference type="Pfam" id="PF01293">
    <property type="entry name" value="PEPCK_ATP"/>
    <property type="match status" value="1"/>
</dbReference>
<dbReference type="PIRSF" id="PIRSF006294">
    <property type="entry name" value="PEP_crbxkin"/>
    <property type="match status" value="1"/>
</dbReference>
<dbReference type="SUPFAM" id="SSF68923">
    <property type="entry name" value="PEP carboxykinase N-terminal domain"/>
    <property type="match status" value="1"/>
</dbReference>
<dbReference type="SUPFAM" id="SSF53795">
    <property type="entry name" value="PEP carboxykinase-like"/>
    <property type="match status" value="1"/>
</dbReference>
<dbReference type="PROSITE" id="PS00532">
    <property type="entry name" value="PEPCK_ATP"/>
    <property type="match status" value="1"/>
</dbReference>
<keyword id="KW-0067">ATP-binding</keyword>
<keyword id="KW-0963">Cytoplasm</keyword>
<keyword id="KW-0210">Decarboxylase</keyword>
<keyword id="KW-0312">Gluconeogenesis</keyword>
<keyword id="KW-0456">Lyase</keyword>
<keyword id="KW-0464">Manganese</keyword>
<keyword id="KW-0479">Metal-binding</keyword>
<keyword id="KW-0547">Nucleotide-binding</keyword>
<feature type="chain" id="PRO_1000192338" description="Phosphoenolpyruvate carboxykinase (ATP)">
    <location>
        <begin position="1"/>
        <end position="540"/>
    </location>
</feature>
<feature type="binding site" evidence="1">
    <location>
        <position position="67"/>
    </location>
    <ligand>
        <name>substrate</name>
    </ligand>
</feature>
<feature type="binding site" evidence="1">
    <location>
        <position position="207"/>
    </location>
    <ligand>
        <name>substrate</name>
    </ligand>
</feature>
<feature type="binding site" evidence="1">
    <location>
        <position position="213"/>
    </location>
    <ligand>
        <name>ATP</name>
        <dbReference type="ChEBI" id="CHEBI:30616"/>
    </ligand>
</feature>
<feature type="binding site" evidence="1">
    <location>
        <position position="213"/>
    </location>
    <ligand>
        <name>Mn(2+)</name>
        <dbReference type="ChEBI" id="CHEBI:29035"/>
    </ligand>
</feature>
<feature type="binding site" evidence="1">
    <location>
        <position position="213"/>
    </location>
    <ligand>
        <name>substrate</name>
    </ligand>
</feature>
<feature type="binding site" evidence="1">
    <location>
        <position position="232"/>
    </location>
    <ligand>
        <name>ATP</name>
        <dbReference type="ChEBI" id="CHEBI:30616"/>
    </ligand>
</feature>
<feature type="binding site" evidence="1">
    <location>
        <position position="232"/>
    </location>
    <ligand>
        <name>Mn(2+)</name>
        <dbReference type="ChEBI" id="CHEBI:29035"/>
    </ligand>
</feature>
<feature type="binding site" evidence="1">
    <location>
        <begin position="248"/>
        <end position="256"/>
    </location>
    <ligand>
        <name>ATP</name>
        <dbReference type="ChEBI" id="CHEBI:30616"/>
    </ligand>
</feature>
<feature type="binding site" evidence="1">
    <location>
        <position position="269"/>
    </location>
    <ligand>
        <name>Mn(2+)</name>
        <dbReference type="ChEBI" id="CHEBI:29035"/>
    </ligand>
</feature>
<feature type="binding site" evidence="1">
    <location>
        <position position="297"/>
    </location>
    <ligand>
        <name>ATP</name>
        <dbReference type="ChEBI" id="CHEBI:30616"/>
    </ligand>
</feature>
<feature type="binding site" evidence="1">
    <location>
        <position position="333"/>
    </location>
    <ligand>
        <name>ATP</name>
        <dbReference type="ChEBI" id="CHEBI:30616"/>
    </ligand>
</feature>
<feature type="binding site" evidence="1">
    <location>
        <position position="333"/>
    </location>
    <ligand>
        <name>substrate</name>
    </ligand>
</feature>
<feature type="binding site" evidence="1">
    <location>
        <begin position="449"/>
        <end position="450"/>
    </location>
    <ligand>
        <name>ATP</name>
        <dbReference type="ChEBI" id="CHEBI:30616"/>
    </ligand>
</feature>
<feature type="binding site" evidence="1">
    <location>
        <position position="455"/>
    </location>
    <ligand>
        <name>ATP</name>
        <dbReference type="ChEBI" id="CHEBI:30616"/>
    </ligand>
</feature>
<reference key="1">
    <citation type="submission" date="2008-08" db="EMBL/GenBank/DDBJ databases">
        <title>Complete sequence of Vibrio fischeri strain MJ11.</title>
        <authorList>
            <person name="Mandel M.J."/>
            <person name="Stabb E.V."/>
            <person name="Ruby E.G."/>
            <person name="Ferriera S."/>
            <person name="Johnson J."/>
            <person name="Kravitz S."/>
            <person name="Beeson K."/>
            <person name="Sutton G."/>
            <person name="Rogers Y.-H."/>
            <person name="Friedman R."/>
            <person name="Frazier M."/>
            <person name="Venter J.C."/>
        </authorList>
    </citation>
    <scope>NUCLEOTIDE SEQUENCE [LARGE SCALE GENOMIC DNA]</scope>
    <source>
        <strain>MJ11</strain>
    </source>
</reference>
<name>PCKA_ALIFM</name>
<gene>
    <name evidence="1" type="primary">pckA</name>
    <name type="ordered locus">VFMJ11_2601</name>
</gene>
<comment type="function">
    <text evidence="1">Involved in the gluconeogenesis. Catalyzes the conversion of oxaloacetate (OAA) to phosphoenolpyruvate (PEP) through direct phosphoryl transfer between the nucleoside triphosphate and OAA.</text>
</comment>
<comment type="catalytic activity">
    <reaction evidence="1">
        <text>oxaloacetate + ATP = phosphoenolpyruvate + ADP + CO2</text>
        <dbReference type="Rhea" id="RHEA:18617"/>
        <dbReference type="ChEBI" id="CHEBI:16452"/>
        <dbReference type="ChEBI" id="CHEBI:16526"/>
        <dbReference type="ChEBI" id="CHEBI:30616"/>
        <dbReference type="ChEBI" id="CHEBI:58702"/>
        <dbReference type="ChEBI" id="CHEBI:456216"/>
        <dbReference type="EC" id="4.1.1.49"/>
    </reaction>
</comment>
<comment type="cofactor">
    <cofactor evidence="1">
        <name>Mn(2+)</name>
        <dbReference type="ChEBI" id="CHEBI:29035"/>
    </cofactor>
    <text evidence="1">Binds 1 Mn(2+) ion per subunit.</text>
</comment>
<comment type="pathway">
    <text evidence="1">Carbohydrate biosynthesis; gluconeogenesis.</text>
</comment>
<comment type="subunit">
    <text evidence="1">Monomer.</text>
</comment>
<comment type="subcellular location">
    <subcellularLocation>
        <location evidence="1">Cytoplasm</location>
    </subcellularLocation>
</comment>
<comment type="similarity">
    <text evidence="1">Belongs to the phosphoenolpyruvate carboxykinase (ATP) family.</text>
</comment>
<sequence length="540" mass="59658">MTVMEHKKAALLDLTQYGLTGVTDVLRNPSYEQLFEEETRPDLEGYERGVMTELGSVAVDTGIFTGRSPKDKYIVKDNTTKDTLWWSDQGKNDNKAITPAVWDDLRSLVTTQLSGKRLFVIDGFCGANPDTRLNVRIITEVAWQAHFVKNMFIRPTEAELENFEPDFVVMNGAKATNPNYEKHGLNSENFVAFNLTERVQIIGGTWYGGEMKKGMFAMMNYLLPLKGIASMHCSANVGEKGDVAVFFGLSGTGKTTLSTDPKRQLIGDDEHGWDDDGIFNFEGGCYAKTIRLSKEAEPDIYNAIRRDALLENVTVRSDSSIDFNDGSKTENTRVSYPIYHIDNIVKPVSKAGHAKKVIFLTADAFGVLPPVAKLTPEQTKYHFLSGFTAKLAGTERGITEPTPTFSAAFGAAFLTLHPTQYAEVLVKRMEAAGAEAYIVNTGWNGTGKRISIQDTRGIIDAILDGSIDQAKTKNIPVFNLEVPTSLPGVDASILDPRDTYTDPLQWDSKAEDLAQRFIKNFAQYTDNEEGKALVKAGPQL</sequence>